<keyword id="KW-0963">Cytoplasm</keyword>
<keyword id="KW-0251">Elongation factor</keyword>
<keyword id="KW-0342">GTP-binding</keyword>
<keyword id="KW-0378">Hydrolase</keyword>
<keyword id="KW-0460">Magnesium</keyword>
<keyword id="KW-0479">Metal-binding</keyword>
<keyword id="KW-0547">Nucleotide-binding</keyword>
<keyword id="KW-0648">Protein biosynthesis</keyword>
<feature type="chain" id="PRO_0000337316" description="Elongation factor Tu">
    <location>
        <begin position="1"/>
        <end position="393"/>
    </location>
</feature>
<feature type="domain" description="tr-type G">
    <location>
        <begin position="6"/>
        <end position="204"/>
    </location>
</feature>
<feature type="region of interest" description="G1" evidence="1">
    <location>
        <begin position="15"/>
        <end position="22"/>
    </location>
</feature>
<feature type="region of interest" description="G2" evidence="1">
    <location>
        <begin position="58"/>
        <end position="62"/>
    </location>
</feature>
<feature type="region of interest" description="G3" evidence="1">
    <location>
        <begin position="79"/>
        <end position="82"/>
    </location>
</feature>
<feature type="region of interest" description="G4" evidence="1">
    <location>
        <begin position="134"/>
        <end position="137"/>
    </location>
</feature>
<feature type="region of interest" description="G5" evidence="1">
    <location>
        <begin position="172"/>
        <end position="174"/>
    </location>
</feature>
<feature type="binding site" evidence="2">
    <location>
        <begin position="15"/>
        <end position="22"/>
    </location>
    <ligand>
        <name>GTP</name>
        <dbReference type="ChEBI" id="CHEBI:37565"/>
    </ligand>
</feature>
<feature type="binding site" evidence="2">
    <location>
        <position position="22"/>
    </location>
    <ligand>
        <name>Mg(2+)</name>
        <dbReference type="ChEBI" id="CHEBI:18420"/>
    </ligand>
</feature>
<feature type="binding site" evidence="2">
    <location>
        <begin position="79"/>
        <end position="83"/>
    </location>
    <ligand>
        <name>GTP</name>
        <dbReference type="ChEBI" id="CHEBI:37565"/>
    </ligand>
</feature>
<feature type="binding site" evidence="2">
    <location>
        <begin position="134"/>
        <end position="137"/>
    </location>
    <ligand>
        <name>GTP</name>
        <dbReference type="ChEBI" id="CHEBI:37565"/>
    </ligand>
</feature>
<organism>
    <name type="scientific">Anaplasma phagocytophilum (strain HZ)</name>
    <dbReference type="NCBI Taxonomy" id="212042"/>
    <lineage>
        <taxon>Bacteria</taxon>
        <taxon>Pseudomonadati</taxon>
        <taxon>Pseudomonadota</taxon>
        <taxon>Alphaproteobacteria</taxon>
        <taxon>Rickettsiales</taxon>
        <taxon>Anaplasmataceae</taxon>
        <taxon>Anaplasma</taxon>
        <taxon>phagocytophilum group</taxon>
    </lineage>
</organism>
<proteinExistence type="inferred from homology"/>
<protein>
    <recommendedName>
        <fullName evidence="2">Elongation factor Tu</fullName>
        <shortName evidence="2">EF-Tu</shortName>
        <ecNumber evidence="2">3.6.5.3</ecNumber>
    </recommendedName>
</protein>
<name>EFTU_ANAPZ</name>
<sequence>MTEGRKPHINVGTIGHVDHGKTTLTAALTTVLARKLSGANKVVKYDEIDKAPEEKARGITISTAHVEYETEGRHYAHVDCPGHADYIKNMITGAAQMDVAILVVSATDGAMPQTREHILLAKQVGVKDIVVWINKCDVVEDEEMLSLVDMEIRELLSQYGYDGDSIDAVRGSAVKALEEDADGPWSDKIMELVGALEKIELPMREKDKPFLMSVEDVFSIPGRGTVVTGRIERGVVRVGDKIDIVGLRELQSTVCTGVEMFHKALEAGEAGDNAGILLRGIKKEDVERGQVLSAPGQMKSYKKFKAEVYVLKKEEGGRHTPFFANYQPQFYVRTTDVTGSISLPAGVEMVMPGDNLSIEVALDKPVAIDKGLRFAVREGGRTVGSGIITEILE</sequence>
<comment type="function">
    <text evidence="2">GTP hydrolase that promotes the GTP-dependent binding of aminoacyl-tRNA to the A-site of ribosomes during protein biosynthesis.</text>
</comment>
<comment type="catalytic activity">
    <reaction evidence="2">
        <text>GTP + H2O = GDP + phosphate + H(+)</text>
        <dbReference type="Rhea" id="RHEA:19669"/>
        <dbReference type="ChEBI" id="CHEBI:15377"/>
        <dbReference type="ChEBI" id="CHEBI:15378"/>
        <dbReference type="ChEBI" id="CHEBI:37565"/>
        <dbReference type="ChEBI" id="CHEBI:43474"/>
        <dbReference type="ChEBI" id="CHEBI:58189"/>
        <dbReference type="EC" id="3.6.5.3"/>
    </reaction>
    <physiologicalReaction direction="left-to-right" evidence="2">
        <dbReference type="Rhea" id="RHEA:19670"/>
    </physiologicalReaction>
</comment>
<comment type="subunit">
    <text evidence="2">Monomer.</text>
</comment>
<comment type="subcellular location">
    <subcellularLocation>
        <location evidence="2">Cytoplasm</location>
    </subcellularLocation>
</comment>
<comment type="similarity">
    <text evidence="2">Belongs to the TRAFAC class translation factor GTPase superfamily. Classic translation factor GTPase family. EF-Tu/EF-1A subfamily.</text>
</comment>
<accession>Q2GJ61</accession>
<reference key="1">
    <citation type="journal article" date="2006" name="PLoS Genet.">
        <title>Comparative genomics of emerging human ehrlichiosis agents.</title>
        <authorList>
            <person name="Dunning Hotopp J.C."/>
            <person name="Lin M."/>
            <person name="Madupu R."/>
            <person name="Crabtree J."/>
            <person name="Angiuoli S.V."/>
            <person name="Eisen J.A."/>
            <person name="Seshadri R."/>
            <person name="Ren Q."/>
            <person name="Wu M."/>
            <person name="Utterback T.R."/>
            <person name="Smith S."/>
            <person name="Lewis M."/>
            <person name="Khouri H."/>
            <person name="Zhang C."/>
            <person name="Niu H."/>
            <person name="Lin Q."/>
            <person name="Ohashi N."/>
            <person name="Zhi N."/>
            <person name="Nelson W.C."/>
            <person name="Brinkac L.M."/>
            <person name="Dodson R.J."/>
            <person name="Rosovitz M.J."/>
            <person name="Sundaram J.P."/>
            <person name="Daugherty S.C."/>
            <person name="Davidsen T."/>
            <person name="Durkin A.S."/>
            <person name="Gwinn M.L."/>
            <person name="Haft D.H."/>
            <person name="Selengut J.D."/>
            <person name="Sullivan S.A."/>
            <person name="Zafar N."/>
            <person name="Zhou L."/>
            <person name="Benahmed F."/>
            <person name="Forberger H."/>
            <person name="Halpin R."/>
            <person name="Mulligan S."/>
            <person name="Robinson J."/>
            <person name="White O."/>
            <person name="Rikihisa Y."/>
            <person name="Tettelin H."/>
        </authorList>
    </citation>
    <scope>NUCLEOTIDE SEQUENCE [LARGE SCALE GENOMIC DNA]</scope>
    <source>
        <strain>HZ</strain>
    </source>
</reference>
<dbReference type="EC" id="3.6.5.3" evidence="2"/>
<dbReference type="EMBL" id="CP000235">
    <property type="protein sequence ID" value="ABD44063.1"/>
    <property type="molecule type" value="Genomic_DNA"/>
</dbReference>
<dbReference type="EMBL" id="CP000235">
    <property type="protein sequence ID" value="ABD44111.1"/>
    <property type="molecule type" value="Genomic_DNA"/>
</dbReference>
<dbReference type="SMR" id="Q2GJ61"/>
<dbReference type="STRING" id="212042.APH_0278"/>
<dbReference type="PaxDb" id="212042-APH_0278"/>
<dbReference type="EnsemblBacteria" id="ABD44063">
    <property type="protein sequence ID" value="ABD44063"/>
    <property type="gene ID" value="APH_0278"/>
</dbReference>
<dbReference type="EnsemblBacteria" id="ABD44111">
    <property type="protein sequence ID" value="ABD44111"/>
    <property type="gene ID" value="APH_1032"/>
</dbReference>
<dbReference type="KEGG" id="aph:APH_0278"/>
<dbReference type="KEGG" id="aph:APH_1032"/>
<dbReference type="eggNOG" id="COG0050">
    <property type="taxonomic scope" value="Bacteria"/>
</dbReference>
<dbReference type="HOGENOM" id="CLU_007265_0_1_5"/>
<dbReference type="Proteomes" id="UP000001943">
    <property type="component" value="Chromosome"/>
</dbReference>
<dbReference type="GO" id="GO:0005829">
    <property type="term" value="C:cytosol"/>
    <property type="evidence" value="ECO:0007669"/>
    <property type="project" value="TreeGrafter"/>
</dbReference>
<dbReference type="GO" id="GO:0005525">
    <property type="term" value="F:GTP binding"/>
    <property type="evidence" value="ECO:0007669"/>
    <property type="project" value="UniProtKB-UniRule"/>
</dbReference>
<dbReference type="GO" id="GO:0003924">
    <property type="term" value="F:GTPase activity"/>
    <property type="evidence" value="ECO:0007669"/>
    <property type="project" value="InterPro"/>
</dbReference>
<dbReference type="GO" id="GO:0097216">
    <property type="term" value="F:guanosine tetraphosphate binding"/>
    <property type="evidence" value="ECO:0007669"/>
    <property type="project" value="UniProtKB-ARBA"/>
</dbReference>
<dbReference type="GO" id="GO:0003746">
    <property type="term" value="F:translation elongation factor activity"/>
    <property type="evidence" value="ECO:0007669"/>
    <property type="project" value="UniProtKB-UniRule"/>
</dbReference>
<dbReference type="CDD" id="cd01884">
    <property type="entry name" value="EF_Tu"/>
    <property type="match status" value="1"/>
</dbReference>
<dbReference type="CDD" id="cd03697">
    <property type="entry name" value="EFTU_II"/>
    <property type="match status" value="1"/>
</dbReference>
<dbReference type="CDD" id="cd03707">
    <property type="entry name" value="EFTU_III"/>
    <property type="match status" value="1"/>
</dbReference>
<dbReference type="FunFam" id="2.40.30.10:FF:000001">
    <property type="entry name" value="Elongation factor Tu"/>
    <property type="match status" value="1"/>
</dbReference>
<dbReference type="FunFam" id="3.40.50.300:FF:000003">
    <property type="entry name" value="Elongation factor Tu"/>
    <property type="match status" value="1"/>
</dbReference>
<dbReference type="Gene3D" id="3.40.50.300">
    <property type="entry name" value="P-loop containing nucleotide triphosphate hydrolases"/>
    <property type="match status" value="1"/>
</dbReference>
<dbReference type="Gene3D" id="2.40.30.10">
    <property type="entry name" value="Translation factors"/>
    <property type="match status" value="2"/>
</dbReference>
<dbReference type="HAMAP" id="MF_00118_B">
    <property type="entry name" value="EF_Tu_B"/>
    <property type="match status" value="1"/>
</dbReference>
<dbReference type="InterPro" id="IPR041709">
    <property type="entry name" value="EF-Tu_GTP-bd"/>
</dbReference>
<dbReference type="InterPro" id="IPR050055">
    <property type="entry name" value="EF-Tu_GTPase"/>
</dbReference>
<dbReference type="InterPro" id="IPR004161">
    <property type="entry name" value="EFTu-like_2"/>
</dbReference>
<dbReference type="InterPro" id="IPR033720">
    <property type="entry name" value="EFTU_2"/>
</dbReference>
<dbReference type="InterPro" id="IPR031157">
    <property type="entry name" value="G_TR_CS"/>
</dbReference>
<dbReference type="InterPro" id="IPR027417">
    <property type="entry name" value="P-loop_NTPase"/>
</dbReference>
<dbReference type="InterPro" id="IPR005225">
    <property type="entry name" value="Small_GTP-bd"/>
</dbReference>
<dbReference type="InterPro" id="IPR000795">
    <property type="entry name" value="T_Tr_GTP-bd_dom"/>
</dbReference>
<dbReference type="InterPro" id="IPR009000">
    <property type="entry name" value="Transl_B-barrel_sf"/>
</dbReference>
<dbReference type="InterPro" id="IPR009001">
    <property type="entry name" value="Transl_elong_EF1A/Init_IF2_C"/>
</dbReference>
<dbReference type="InterPro" id="IPR004541">
    <property type="entry name" value="Transl_elong_EFTu/EF1A_bac/org"/>
</dbReference>
<dbReference type="InterPro" id="IPR004160">
    <property type="entry name" value="Transl_elong_EFTu/EF1A_C"/>
</dbReference>
<dbReference type="NCBIfam" id="TIGR00485">
    <property type="entry name" value="EF-Tu"/>
    <property type="match status" value="1"/>
</dbReference>
<dbReference type="NCBIfam" id="NF000766">
    <property type="entry name" value="PRK00049.1"/>
    <property type="match status" value="1"/>
</dbReference>
<dbReference type="NCBIfam" id="NF009372">
    <property type="entry name" value="PRK12735.1"/>
    <property type="match status" value="1"/>
</dbReference>
<dbReference type="NCBIfam" id="NF009373">
    <property type="entry name" value="PRK12736.1"/>
    <property type="match status" value="1"/>
</dbReference>
<dbReference type="NCBIfam" id="TIGR00231">
    <property type="entry name" value="small_GTP"/>
    <property type="match status" value="1"/>
</dbReference>
<dbReference type="PANTHER" id="PTHR43721:SF22">
    <property type="entry name" value="ELONGATION FACTOR TU, MITOCHONDRIAL"/>
    <property type="match status" value="1"/>
</dbReference>
<dbReference type="PANTHER" id="PTHR43721">
    <property type="entry name" value="ELONGATION FACTOR TU-RELATED"/>
    <property type="match status" value="1"/>
</dbReference>
<dbReference type="Pfam" id="PF00009">
    <property type="entry name" value="GTP_EFTU"/>
    <property type="match status" value="1"/>
</dbReference>
<dbReference type="Pfam" id="PF03144">
    <property type="entry name" value="GTP_EFTU_D2"/>
    <property type="match status" value="1"/>
</dbReference>
<dbReference type="Pfam" id="PF03143">
    <property type="entry name" value="GTP_EFTU_D3"/>
    <property type="match status" value="1"/>
</dbReference>
<dbReference type="PRINTS" id="PR00315">
    <property type="entry name" value="ELONGATNFCT"/>
</dbReference>
<dbReference type="SUPFAM" id="SSF50465">
    <property type="entry name" value="EF-Tu/eEF-1alpha/eIF2-gamma C-terminal domain"/>
    <property type="match status" value="1"/>
</dbReference>
<dbReference type="SUPFAM" id="SSF52540">
    <property type="entry name" value="P-loop containing nucleoside triphosphate hydrolases"/>
    <property type="match status" value="1"/>
</dbReference>
<dbReference type="SUPFAM" id="SSF50447">
    <property type="entry name" value="Translation proteins"/>
    <property type="match status" value="1"/>
</dbReference>
<dbReference type="PROSITE" id="PS00301">
    <property type="entry name" value="G_TR_1"/>
    <property type="match status" value="1"/>
</dbReference>
<dbReference type="PROSITE" id="PS51722">
    <property type="entry name" value="G_TR_2"/>
    <property type="match status" value="1"/>
</dbReference>
<evidence type="ECO:0000250" key="1"/>
<evidence type="ECO:0000255" key="2">
    <source>
        <dbReference type="HAMAP-Rule" id="MF_00118"/>
    </source>
</evidence>
<gene>
    <name evidence="2" type="primary">tuf1</name>
    <name type="synonym">tuf-1</name>
    <name type="ordered locus">APH_0278</name>
</gene>
<gene>
    <name evidence="2" type="primary">tuf2</name>
    <name type="synonym">tuf-2</name>
    <name type="ordered locus">APH_1032</name>
</gene>